<sequence>MLSKQKMARINELAKKAKSSGLTKEEALEQQQLRREYIQVFRKAMEDMLHSVTVIDPNGNDVTPKKLKESQKSRLH</sequence>
<dbReference type="EMBL" id="CP001638">
    <property type="protein sequence ID" value="ACS24092.1"/>
    <property type="molecule type" value="Genomic_DNA"/>
</dbReference>
<dbReference type="SMR" id="C5D9K6"/>
<dbReference type="STRING" id="471223.GWCH70_1239"/>
<dbReference type="KEGG" id="gwc:GWCH70_1239"/>
<dbReference type="eggNOG" id="COG4224">
    <property type="taxonomic scope" value="Bacteria"/>
</dbReference>
<dbReference type="HOGENOM" id="CLU_173137_0_2_9"/>
<dbReference type="OrthoDB" id="390105at2"/>
<dbReference type="GO" id="GO:0005737">
    <property type="term" value="C:cytoplasm"/>
    <property type="evidence" value="ECO:0007669"/>
    <property type="project" value="UniProtKB-SubCell"/>
</dbReference>
<dbReference type="Gene3D" id="1.10.287.540">
    <property type="entry name" value="Helix hairpin bin"/>
    <property type="match status" value="1"/>
</dbReference>
<dbReference type="HAMAP" id="MF_01103">
    <property type="entry name" value="UPF0291"/>
    <property type="match status" value="1"/>
</dbReference>
<dbReference type="InterPro" id="IPR009242">
    <property type="entry name" value="DUF896"/>
</dbReference>
<dbReference type="PANTHER" id="PTHR37300">
    <property type="entry name" value="UPF0291 PROTEIN CBO2609/CLC_2481"/>
    <property type="match status" value="1"/>
</dbReference>
<dbReference type="PANTHER" id="PTHR37300:SF1">
    <property type="entry name" value="UPF0291 PROTEIN YNZC"/>
    <property type="match status" value="1"/>
</dbReference>
<dbReference type="Pfam" id="PF05979">
    <property type="entry name" value="DUF896"/>
    <property type="match status" value="1"/>
</dbReference>
<dbReference type="SUPFAM" id="SSF158221">
    <property type="entry name" value="YnzC-like"/>
    <property type="match status" value="1"/>
</dbReference>
<gene>
    <name type="ordered locus">GWCH70_1239</name>
</gene>
<reference key="1">
    <citation type="submission" date="2009-06" db="EMBL/GenBank/DDBJ databases">
        <title>Complete sequence of chromosome of Geopacillus sp. WCH70.</title>
        <authorList>
            <consortium name="US DOE Joint Genome Institute"/>
            <person name="Lucas S."/>
            <person name="Copeland A."/>
            <person name="Lapidus A."/>
            <person name="Glavina del Rio T."/>
            <person name="Dalin E."/>
            <person name="Tice H."/>
            <person name="Bruce D."/>
            <person name="Goodwin L."/>
            <person name="Pitluck S."/>
            <person name="Chertkov O."/>
            <person name="Brettin T."/>
            <person name="Detter J.C."/>
            <person name="Han C."/>
            <person name="Larimer F."/>
            <person name="Land M."/>
            <person name="Hauser L."/>
            <person name="Kyrpides N."/>
            <person name="Mikhailova N."/>
            <person name="Brumm P."/>
            <person name="Mead D.A."/>
            <person name="Richardson P."/>
        </authorList>
    </citation>
    <scope>NUCLEOTIDE SEQUENCE [LARGE SCALE GENOMIC DNA]</scope>
    <source>
        <strain>WCH70</strain>
    </source>
</reference>
<evidence type="ECO:0000255" key="1">
    <source>
        <dbReference type="HAMAP-Rule" id="MF_01103"/>
    </source>
</evidence>
<evidence type="ECO:0000256" key="2">
    <source>
        <dbReference type="SAM" id="MobiDB-lite"/>
    </source>
</evidence>
<comment type="subcellular location">
    <subcellularLocation>
        <location evidence="1">Cytoplasm</location>
    </subcellularLocation>
</comment>
<comment type="similarity">
    <text evidence="1">Belongs to the UPF0291 family.</text>
</comment>
<feature type="chain" id="PRO_1000213551" description="UPF0291 protein GWCH70_1239">
    <location>
        <begin position="1"/>
        <end position="76"/>
    </location>
</feature>
<feature type="region of interest" description="Disordered" evidence="2">
    <location>
        <begin position="54"/>
        <end position="76"/>
    </location>
</feature>
<feature type="compositionally biased region" description="Basic and acidic residues" evidence="2">
    <location>
        <begin position="63"/>
        <end position="76"/>
    </location>
</feature>
<proteinExistence type="inferred from homology"/>
<keyword id="KW-0963">Cytoplasm</keyword>
<protein>
    <recommendedName>
        <fullName evidence="1">UPF0291 protein GWCH70_1239</fullName>
    </recommendedName>
</protein>
<accession>C5D9K6</accession>
<name>Y1239_GEOSW</name>
<organism>
    <name type="scientific">Geobacillus sp. (strain WCH70)</name>
    <dbReference type="NCBI Taxonomy" id="471223"/>
    <lineage>
        <taxon>Bacteria</taxon>
        <taxon>Bacillati</taxon>
        <taxon>Bacillota</taxon>
        <taxon>Bacilli</taxon>
        <taxon>Bacillales</taxon>
        <taxon>Anoxybacillaceae</taxon>
        <taxon>Geobacillus</taxon>
    </lineage>
</organism>